<sequence>MKMSRLCLSIALLVLLGTLAASTPGCDTSNQAKAQRPDFCLEPPYTGPCKAKMIRYFYNAKAGFCETFVYGGCKAKSNNFRSAEDCMRTCGGAIGPRENL</sequence>
<dbReference type="EMBL" id="M20935">
    <property type="protein sequence ID" value="AAA51418.1"/>
    <property type="molecule type" value="Genomic_DNA"/>
</dbReference>
<dbReference type="EMBL" id="M20931">
    <property type="protein sequence ID" value="AAA51418.1"/>
    <property type="status" value="JOINED"/>
    <property type="molecule type" value="Genomic_DNA"/>
</dbReference>
<dbReference type="EMBL" id="M20933">
    <property type="protein sequence ID" value="AAA51418.1"/>
    <property type="status" value="JOINED"/>
    <property type="molecule type" value="Genomic_DNA"/>
</dbReference>
<dbReference type="EMBL" id="X05275">
    <property type="protein sequence ID" value="CAA28887.1"/>
    <property type="molecule type" value="mRNA"/>
</dbReference>
<dbReference type="EMBL" id="X06685">
    <property type="protein sequence ID" value="CAA29881.1"/>
    <property type="molecule type" value="Genomic_DNA"/>
</dbReference>
<dbReference type="EMBL" id="X03366">
    <property type="protein sequence ID" value="CAA27064.1"/>
    <property type="status" value="ALT_SEQ"/>
    <property type="molecule type" value="Genomic_DNA"/>
</dbReference>
<dbReference type="EMBL" id="X03366">
    <property type="protein sequence ID" value="CAA27065.1"/>
    <property type="molecule type" value="Genomic_DNA"/>
</dbReference>
<dbReference type="PIR" id="S00274">
    <property type="entry name" value="TIBOSP"/>
</dbReference>
<dbReference type="RefSeq" id="NP_991355.1">
    <property type="nucleotide sequence ID" value="NM_205786.1"/>
</dbReference>
<dbReference type="SMR" id="P04815"/>
<dbReference type="FunCoup" id="P04815">
    <property type="interactions" value="9"/>
</dbReference>
<dbReference type="STRING" id="9913.ENSBTAP00000063452"/>
<dbReference type="MEROPS" id="I02.002"/>
<dbReference type="PaxDb" id="9913-ENSBTAP00000023042"/>
<dbReference type="GeneID" id="404103"/>
<dbReference type="KEGG" id="bta:404103"/>
<dbReference type="eggNOG" id="KOG3540">
    <property type="taxonomic scope" value="Eukaryota"/>
</dbReference>
<dbReference type="InParanoid" id="P04815"/>
<dbReference type="OrthoDB" id="4473401at2759"/>
<dbReference type="Proteomes" id="UP000009136">
    <property type="component" value="Unplaced"/>
</dbReference>
<dbReference type="GO" id="GO:0005615">
    <property type="term" value="C:extracellular space"/>
    <property type="evidence" value="ECO:0000318"/>
    <property type="project" value="GO_Central"/>
</dbReference>
<dbReference type="GO" id="GO:0004867">
    <property type="term" value="F:serine-type endopeptidase inhibitor activity"/>
    <property type="evidence" value="ECO:0000318"/>
    <property type="project" value="GO_Central"/>
</dbReference>
<dbReference type="CDD" id="cd22592">
    <property type="entry name" value="Kunitz_BPTI"/>
    <property type="match status" value="1"/>
</dbReference>
<dbReference type="FunFam" id="4.10.410.10:FF:000005">
    <property type="entry name" value="Pancreatic trypsin inhibitor"/>
    <property type="match status" value="1"/>
</dbReference>
<dbReference type="Gene3D" id="4.10.410.10">
    <property type="entry name" value="Pancreatic trypsin inhibitor Kunitz domain"/>
    <property type="match status" value="1"/>
</dbReference>
<dbReference type="InterPro" id="IPR002223">
    <property type="entry name" value="Kunitz_BPTI"/>
</dbReference>
<dbReference type="InterPro" id="IPR036880">
    <property type="entry name" value="Kunitz_BPTI_sf"/>
</dbReference>
<dbReference type="InterPro" id="IPR020901">
    <property type="entry name" value="Prtase_inh_Kunz-CS"/>
</dbReference>
<dbReference type="InterPro" id="IPR050098">
    <property type="entry name" value="TFPI/VKTCI-like"/>
</dbReference>
<dbReference type="PANTHER" id="PTHR10083">
    <property type="entry name" value="KUNITZ-TYPE PROTEASE INHIBITOR-RELATED"/>
    <property type="match status" value="1"/>
</dbReference>
<dbReference type="PANTHER" id="PTHR10083:SF367">
    <property type="entry name" value="SPLEEN TRYPSIN INHIBITOR I"/>
    <property type="match status" value="1"/>
</dbReference>
<dbReference type="Pfam" id="PF00014">
    <property type="entry name" value="Kunitz_BPTI"/>
    <property type="match status" value="1"/>
</dbReference>
<dbReference type="PRINTS" id="PR00759">
    <property type="entry name" value="BASICPTASE"/>
</dbReference>
<dbReference type="SMART" id="SM00131">
    <property type="entry name" value="KU"/>
    <property type="match status" value="1"/>
</dbReference>
<dbReference type="SUPFAM" id="SSF57362">
    <property type="entry name" value="BPTI-like"/>
    <property type="match status" value="1"/>
</dbReference>
<dbReference type="PROSITE" id="PS00280">
    <property type="entry name" value="BPTI_KUNITZ_1"/>
    <property type="match status" value="1"/>
</dbReference>
<dbReference type="PROSITE" id="PS50279">
    <property type="entry name" value="BPTI_KUNITZ_2"/>
    <property type="match status" value="1"/>
</dbReference>
<comment type="subcellular location">
    <subcellularLocation>
        <location>Secreted</location>
    </subcellularLocation>
</comment>
<keyword id="KW-0903">Direct protein sequencing</keyword>
<keyword id="KW-1015">Disulfide bond</keyword>
<keyword id="KW-0646">Protease inhibitor</keyword>
<keyword id="KW-1185">Reference proteome</keyword>
<keyword id="KW-0964">Secreted</keyword>
<keyword id="KW-0722">Serine protease inhibitor</keyword>
<keyword id="KW-0732">Signal</keyword>
<accession>P04815</accession>
<feature type="signal peptide" evidence="2">
    <location>
        <begin position="1"/>
        <end position="21"/>
    </location>
</feature>
<feature type="propeptide" id="PRO_0000016855">
    <location>
        <begin position="22"/>
        <end position="33"/>
    </location>
</feature>
<feature type="chain" id="PRO_0000016856" description="Spleen trypsin inhibitor I">
    <location>
        <begin position="34"/>
        <end position="99"/>
    </location>
</feature>
<feature type="chain" id="PRO_0000016857" description="Spleen trypsin inhibitor III">
    <location>
        <begin position="36"/>
        <end position="97"/>
    </location>
</feature>
<feature type="chain" id="PRO_0000016858" description="Spleen trypsin inhibitor II">
    <location>
        <begin position="36"/>
        <end position="93"/>
    </location>
</feature>
<feature type="propeptide" id="PRO_0000016859">
    <location>
        <position position="100"/>
    </location>
</feature>
<feature type="domain" description="BPTI/Kunitz inhibitor" evidence="3">
    <location>
        <begin position="40"/>
        <end position="90"/>
    </location>
</feature>
<feature type="site" description="Reactive bond" evidence="1">
    <location>
        <begin position="50"/>
        <end position="51"/>
    </location>
</feature>
<feature type="disulfide bond" evidence="3">
    <location>
        <begin position="40"/>
        <end position="90"/>
    </location>
</feature>
<feature type="disulfide bond" evidence="3">
    <location>
        <begin position="49"/>
        <end position="73"/>
    </location>
</feature>
<feature type="disulfide bond" evidence="3">
    <location>
        <begin position="65"/>
        <end position="86"/>
    </location>
</feature>
<protein>
    <recommendedName>
        <fullName>Spleen trypsin inhibitor I</fullName>
        <shortName>SI-I</shortName>
    </recommendedName>
    <component>
        <recommendedName>
            <fullName>Spleen trypsin inhibitor II</fullName>
            <shortName>SI-II</shortName>
        </recommendedName>
    </component>
    <component>
        <recommendedName>
            <fullName>Spleen trypsin inhibitor III</fullName>
            <shortName>SI-III</shortName>
        </recommendedName>
    </component>
</protein>
<name>BPT2_BOVIN</name>
<organism>
    <name type="scientific">Bos taurus</name>
    <name type="common">Bovine</name>
    <dbReference type="NCBI Taxonomy" id="9913"/>
    <lineage>
        <taxon>Eukaryota</taxon>
        <taxon>Metazoa</taxon>
        <taxon>Chordata</taxon>
        <taxon>Craniata</taxon>
        <taxon>Vertebrata</taxon>
        <taxon>Euteleostomi</taxon>
        <taxon>Mammalia</taxon>
        <taxon>Eutheria</taxon>
        <taxon>Laurasiatheria</taxon>
        <taxon>Artiodactyla</taxon>
        <taxon>Ruminantia</taxon>
        <taxon>Pecora</taxon>
        <taxon>Bovidae</taxon>
        <taxon>Bovinae</taxon>
        <taxon>Bos</taxon>
    </lineage>
</organism>
<proteinExistence type="evidence at protein level"/>
<evidence type="ECO:0000250" key="1"/>
<evidence type="ECO:0000255" key="2"/>
<evidence type="ECO:0000255" key="3">
    <source>
        <dbReference type="PROSITE-ProRule" id="PRU00031"/>
    </source>
</evidence>
<reference key="1">
    <citation type="journal article" date="1987" name="J. Mol. Biol.">
        <title>Sequences of the genes and polypeptide precursors for two bovine protease inhibitors.</title>
        <authorList>
            <person name="Creighton T.E."/>
            <person name="Charles I.G."/>
        </authorList>
    </citation>
    <scope>NUCLEOTIDE SEQUENCE [GENOMIC DNA]</scope>
</reference>
<reference key="2">
    <citation type="journal article" date="1987" name="Cold Spring Harb. Symp. Quant. Biol.">
        <title>Biosynthesis, processing, and evolution of bovine pancreatic trypsin inhibitor.</title>
        <authorList>
            <person name="Creighton T.E."/>
            <person name="Charles I.G."/>
        </authorList>
    </citation>
    <scope>NUCLEOTIDE SEQUENCE [GENOMIC DNA]</scope>
</reference>
<reference key="3">
    <citation type="journal article" date="1986" name="Biochem. J.">
        <title>Sequences encoding two trypsin inhibitors occur in strikingly similar genomic environments.</title>
        <authorList>
            <person name="Kingston I.B."/>
            <person name="Anderson S."/>
        </authorList>
    </citation>
    <scope>NUCLEOTIDE SEQUENCE OF 34-97</scope>
</reference>
<reference key="4">
    <citation type="journal article" date="1988" name="Biol. Chem. Hoppe-Seyler">
        <title>Aprotinin-like isoinhibitors in bovine organs.</title>
        <authorList>
            <person name="Fioretti E."/>
            <person name="Angeletti M."/>
            <person name="Fiorucci L."/>
            <person name="Barra D."/>
            <person name="Bossa F."/>
            <person name="Ascoli F."/>
        </authorList>
    </citation>
    <scope>PROTEIN SEQUENCE OF 34-99</scope>
</reference>
<reference key="5">
    <citation type="journal article" date="1987" name="J. Biol. Chem.">
        <title>Primary structure of a protease isoinhibitor from bovine spleen. A possible intermediate in the processing of the primary gene product.</title>
        <authorList>
            <person name="Barra D."/>
            <person name="Simmaco M."/>
            <person name="Bossa F."/>
            <person name="Fioretti E."/>
            <person name="Angeletti M."/>
            <person name="Ascoli F."/>
        </authorList>
    </citation>
    <scope>PROTEIN SEQUENCE OF 34-99</scope>
    <source>
        <tissue>Spleen</tissue>
    </source>
</reference>
<reference key="6">
    <citation type="journal article" date="1985" name="J. Biol. Chem.">
        <title>Primary structure and antiproteolytic activity of a Kunitz-type inhibitor from bovine spleen.</title>
        <authorList>
            <person name="Fioretti E."/>
            <person name="Iacopino G."/>
            <person name="Angeletti M."/>
            <person name="Barra D."/>
            <person name="Bossa F."/>
            <person name="Ascoli F."/>
        </authorList>
    </citation>
    <scope>PROTEIN SEQUENCE OF 36-93</scope>
    <source>
        <tissue>Spleen</tissue>
    </source>
</reference>
<reference key="7">
    <citation type="journal article" date="1991" name="Biochim. Biophys. Acta">
        <title>Proteinase isoinhibitors from bovine spleen: primary structure of an intermediate in the processing of the precursor.</title>
        <authorList>
            <person name="Barra D."/>
            <person name="Fioretti E."/>
            <person name="Angeletti M."/>
            <person name="Maras B."/>
            <person name="Bossa F."/>
            <person name="Ascoli F."/>
        </authorList>
    </citation>
    <scope>PROTEIN SEQUENCE OF 36-97</scope>
    <source>
        <tissue>Spleen</tissue>
    </source>
</reference>